<reference key="1">
    <citation type="journal article" date="2011" name="J. Bacteriol.">
        <title>Genome sequence of lineage III Listeria monocytogenes strain HCC23.</title>
        <authorList>
            <person name="Steele C.L."/>
            <person name="Donaldson J.R."/>
            <person name="Paul D."/>
            <person name="Banes M.M."/>
            <person name="Arick T."/>
            <person name="Bridges S.M."/>
            <person name="Lawrence M.L."/>
        </authorList>
    </citation>
    <scope>NUCLEOTIDE SEQUENCE [LARGE SCALE GENOMIC DNA]</scope>
    <source>
        <strain>HCC23</strain>
    </source>
</reference>
<proteinExistence type="inferred from homology"/>
<name>COAA_LISMH</name>
<gene>
    <name evidence="1" type="primary">coaA</name>
    <name type="ordered locus">LMHCC_1699</name>
</gene>
<dbReference type="EC" id="2.7.1.33" evidence="1"/>
<dbReference type="EMBL" id="CP001175">
    <property type="protein sequence ID" value="ACK40041.1"/>
    <property type="molecule type" value="Genomic_DNA"/>
</dbReference>
<dbReference type="RefSeq" id="WP_003729407.1">
    <property type="nucleotide sequence ID" value="NC_011660.1"/>
</dbReference>
<dbReference type="SMR" id="B8DEL2"/>
<dbReference type="KEGG" id="lmh:LMHCC_1699"/>
<dbReference type="HOGENOM" id="CLU_053818_1_1_9"/>
<dbReference type="UniPathway" id="UPA00241">
    <property type="reaction ID" value="UER00352"/>
</dbReference>
<dbReference type="GO" id="GO:0005737">
    <property type="term" value="C:cytoplasm"/>
    <property type="evidence" value="ECO:0007669"/>
    <property type="project" value="UniProtKB-SubCell"/>
</dbReference>
<dbReference type="GO" id="GO:0005524">
    <property type="term" value="F:ATP binding"/>
    <property type="evidence" value="ECO:0007669"/>
    <property type="project" value="UniProtKB-UniRule"/>
</dbReference>
<dbReference type="GO" id="GO:0004594">
    <property type="term" value="F:pantothenate kinase activity"/>
    <property type="evidence" value="ECO:0007669"/>
    <property type="project" value="UniProtKB-UniRule"/>
</dbReference>
<dbReference type="GO" id="GO:0015937">
    <property type="term" value="P:coenzyme A biosynthetic process"/>
    <property type="evidence" value="ECO:0007669"/>
    <property type="project" value="UniProtKB-UniRule"/>
</dbReference>
<dbReference type="CDD" id="cd02025">
    <property type="entry name" value="PanK"/>
    <property type="match status" value="1"/>
</dbReference>
<dbReference type="FunFam" id="3.40.50.300:FF:001878">
    <property type="entry name" value="Pantothenate kinase"/>
    <property type="match status" value="1"/>
</dbReference>
<dbReference type="Gene3D" id="3.40.50.300">
    <property type="entry name" value="P-loop containing nucleotide triphosphate hydrolases"/>
    <property type="match status" value="1"/>
</dbReference>
<dbReference type="HAMAP" id="MF_00215">
    <property type="entry name" value="Pantothen_kinase_1"/>
    <property type="match status" value="1"/>
</dbReference>
<dbReference type="InterPro" id="IPR027417">
    <property type="entry name" value="P-loop_NTPase"/>
</dbReference>
<dbReference type="InterPro" id="IPR004566">
    <property type="entry name" value="PanK"/>
</dbReference>
<dbReference type="InterPro" id="IPR006083">
    <property type="entry name" value="PRK/URK"/>
</dbReference>
<dbReference type="NCBIfam" id="TIGR00554">
    <property type="entry name" value="panK_bact"/>
    <property type="match status" value="1"/>
</dbReference>
<dbReference type="PANTHER" id="PTHR10285">
    <property type="entry name" value="URIDINE KINASE"/>
    <property type="match status" value="1"/>
</dbReference>
<dbReference type="Pfam" id="PF00485">
    <property type="entry name" value="PRK"/>
    <property type="match status" value="1"/>
</dbReference>
<dbReference type="PIRSF" id="PIRSF000545">
    <property type="entry name" value="Pantothenate_kin"/>
    <property type="match status" value="1"/>
</dbReference>
<dbReference type="SUPFAM" id="SSF52540">
    <property type="entry name" value="P-loop containing nucleoside triphosphate hydrolases"/>
    <property type="match status" value="1"/>
</dbReference>
<sequence length="306" mass="36135">MNDYNHYFHFPREEWRKLEVSKDQILTAEELEEIRGLNDRISLQDISEIYLPLIKLIAIQYHEAIFIHGEKMEYLKKKESRAPFIIALAGSVAVGKSTTARVFKLMLDRWFSKTRQVELVTTDGFLYPNKVLEERGIMDKKGFPESYDRDRFAKFLTDLKANKEDVEIPLYSHFTYDVLDETRVIHNPDIVIIEGINVLQADQHESLFPSDFFDFSVYMDANESDIKKWYLERFFMLRETAFQDESSYFHPYTKISKQEAETFALGVWDTINGVNLKENIEKTKYRADLVLHKGTDHLISDIYLRK</sequence>
<feature type="chain" id="PRO_1000124800" description="Pantothenate kinase">
    <location>
        <begin position="1"/>
        <end position="306"/>
    </location>
</feature>
<feature type="binding site" evidence="1">
    <location>
        <begin position="90"/>
        <end position="97"/>
    </location>
    <ligand>
        <name>ATP</name>
        <dbReference type="ChEBI" id="CHEBI:30616"/>
    </ligand>
</feature>
<organism>
    <name type="scientific">Listeria monocytogenes serotype 4a (strain HCC23)</name>
    <dbReference type="NCBI Taxonomy" id="552536"/>
    <lineage>
        <taxon>Bacteria</taxon>
        <taxon>Bacillati</taxon>
        <taxon>Bacillota</taxon>
        <taxon>Bacilli</taxon>
        <taxon>Bacillales</taxon>
        <taxon>Listeriaceae</taxon>
        <taxon>Listeria</taxon>
    </lineage>
</organism>
<accession>B8DEL2</accession>
<keyword id="KW-0067">ATP-binding</keyword>
<keyword id="KW-0173">Coenzyme A biosynthesis</keyword>
<keyword id="KW-0963">Cytoplasm</keyword>
<keyword id="KW-0418">Kinase</keyword>
<keyword id="KW-0547">Nucleotide-binding</keyword>
<keyword id="KW-0808">Transferase</keyword>
<comment type="catalytic activity">
    <reaction evidence="1">
        <text>(R)-pantothenate + ATP = (R)-4'-phosphopantothenate + ADP + H(+)</text>
        <dbReference type="Rhea" id="RHEA:16373"/>
        <dbReference type="ChEBI" id="CHEBI:10986"/>
        <dbReference type="ChEBI" id="CHEBI:15378"/>
        <dbReference type="ChEBI" id="CHEBI:29032"/>
        <dbReference type="ChEBI" id="CHEBI:30616"/>
        <dbReference type="ChEBI" id="CHEBI:456216"/>
        <dbReference type="EC" id="2.7.1.33"/>
    </reaction>
</comment>
<comment type="pathway">
    <text evidence="1">Cofactor biosynthesis; coenzyme A biosynthesis; CoA from (R)-pantothenate: step 1/5.</text>
</comment>
<comment type="subcellular location">
    <subcellularLocation>
        <location evidence="1">Cytoplasm</location>
    </subcellularLocation>
</comment>
<comment type="similarity">
    <text evidence="1">Belongs to the prokaryotic pantothenate kinase family.</text>
</comment>
<evidence type="ECO:0000255" key="1">
    <source>
        <dbReference type="HAMAP-Rule" id="MF_00215"/>
    </source>
</evidence>
<protein>
    <recommendedName>
        <fullName evidence="1">Pantothenate kinase</fullName>
        <ecNumber evidence="1">2.7.1.33</ecNumber>
    </recommendedName>
    <alternativeName>
        <fullName evidence="1">Pantothenic acid kinase</fullName>
    </alternativeName>
</protein>